<name>CCSA_BUXMI</name>
<dbReference type="EMBL" id="EF380351">
    <property type="protein sequence ID" value="ABQ45299.1"/>
    <property type="molecule type" value="Genomic_DNA"/>
</dbReference>
<dbReference type="RefSeq" id="YP_001294234.1">
    <property type="nucleotide sequence ID" value="NC_009599.1"/>
</dbReference>
<dbReference type="SMR" id="A6MM86"/>
<dbReference type="GeneID" id="5236949"/>
<dbReference type="GO" id="GO:0009535">
    <property type="term" value="C:chloroplast thylakoid membrane"/>
    <property type="evidence" value="ECO:0007669"/>
    <property type="project" value="UniProtKB-SubCell"/>
</dbReference>
<dbReference type="GO" id="GO:0005886">
    <property type="term" value="C:plasma membrane"/>
    <property type="evidence" value="ECO:0007669"/>
    <property type="project" value="TreeGrafter"/>
</dbReference>
<dbReference type="GO" id="GO:0020037">
    <property type="term" value="F:heme binding"/>
    <property type="evidence" value="ECO:0007669"/>
    <property type="project" value="InterPro"/>
</dbReference>
<dbReference type="GO" id="GO:0017004">
    <property type="term" value="P:cytochrome complex assembly"/>
    <property type="evidence" value="ECO:0007669"/>
    <property type="project" value="UniProtKB-UniRule"/>
</dbReference>
<dbReference type="HAMAP" id="MF_01391">
    <property type="entry name" value="CytC_CcsA"/>
    <property type="match status" value="1"/>
</dbReference>
<dbReference type="InterPro" id="IPR002541">
    <property type="entry name" value="Cyt_c_assembly"/>
</dbReference>
<dbReference type="InterPro" id="IPR017562">
    <property type="entry name" value="Cyt_c_biogenesis_CcsA"/>
</dbReference>
<dbReference type="InterPro" id="IPR045062">
    <property type="entry name" value="Cyt_c_biogenesis_CcsA/CcmC"/>
</dbReference>
<dbReference type="NCBIfam" id="TIGR03144">
    <property type="entry name" value="cytochr_II_ccsB"/>
    <property type="match status" value="1"/>
</dbReference>
<dbReference type="PANTHER" id="PTHR30071:SF1">
    <property type="entry name" value="CYTOCHROME B_B6 PROTEIN-RELATED"/>
    <property type="match status" value="1"/>
</dbReference>
<dbReference type="PANTHER" id="PTHR30071">
    <property type="entry name" value="HEME EXPORTER PROTEIN C"/>
    <property type="match status" value="1"/>
</dbReference>
<dbReference type="Pfam" id="PF01578">
    <property type="entry name" value="Cytochrom_C_asm"/>
    <property type="match status" value="1"/>
</dbReference>
<sequence length="321" mass="36525">MIFLTLEHILTHISFSIVSIVITIHLITLLVDEIVGLYDSLEKGMISTFLCITGLLVTRWIYSGHLPLSNLYESLIFLSWSFSIIHMIPYFKNHKNHLSLVTAPSAIFTQGFATSGLLTEMHQSAILVPALQSQWLMMHVSMMVLSYGALLCGSLLSVALLVITFRKNIDIFGKRNHLLIGSFSFGEIQYTNERSNVLRNVSFLSLRNYRRYQLIRQLDNWSYRVISLGFIFLTIGILSGAVWANEAWGSYWNWDPKETWAFITWTIFAIYLHTRTNKNFQGADSAIVASIGFIIIWICYFGVNLLGIGLHSYGSFILTSN</sequence>
<accession>A6MM86</accession>
<keyword id="KW-0150">Chloroplast</keyword>
<keyword id="KW-0201">Cytochrome c-type biogenesis</keyword>
<keyword id="KW-0472">Membrane</keyword>
<keyword id="KW-0934">Plastid</keyword>
<keyword id="KW-0793">Thylakoid</keyword>
<keyword id="KW-0812">Transmembrane</keyword>
<keyword id="KW-1133">Transmembrane helix</keyword>
<gene>
    <name evidence="1" type="primary">ccsA</name>
</gene>
<comment type="function">
    <text evidence="1">Required during biogenesis of c-type cytochromes (cytochrome c6 and cytochrome f) at the step of heme attachment.</text>
</comment>
<comment type="subunit">
    <text evidence="1">May interact with Ccs1.</text>
</comment>
<comment type="subcellular location">
    <subcellularLocation>
        <location evidence="1">Plastid</location>
        <location evidence="1">Chloroplast thylakoid membrane</location>
        <topology evidence="1">Multi-pass membrane protein</topology>
    </subcellularLocation>
</comment>
<comment type="similarity">
    <text evidence="1">Belongs to the CcmF/CycK/Ccl1/NrfE/CcsA family.</text>
</comment>
<reference key="1">
    <citation type="journal article" date="2007" name="Mol. Phylogenet. Evol.">
        <title>Phylogenetic and evolutionary implications of complete chloroplast genome sequences of four early-diverging angiosperms: Buxus (Buxaceae), Chloranthus (Chloranthaceae), Dioscorea (Dioscoreaceae), and Illicium (Schisandraceae).</title>
        <authorList>
            <person name="Hansen D.R."/>
            <person name="Dastidar S.G."/>
            <person name="Cai Z."/>
            <person name="Penaflor C."/>
            <person name="Kuehl J.V."/>
            <person name="Boore J.L."/>
            <person name="Jansen R.K."/>
        </authorList>
    </citation>
    <scope>NUCLEOTIDE SEQUENCE [LARGE SCALE GENOMIC DNA]</scope>
</reference>
<protein>
    <recommendedName>
        <fullName evidence="1">Cytochrome c biogenesis protein CcsA</fullName>
    </recommendedName>
</protein>
<feature type="chain" id="PRO_0000353735" description="Cytochrome c biogenesis protein CcsA">
    <location>
        <begin position="1"/>
        <end position="321"/>
    </location>
</feature>
<feature type="transmembrane region" description="Helical" evidence="1">
    <location>
        <begin position="17"/>
        <end position="37"/>
    </location>
</feature>
<feature type="transmembrane region" description="Helical" evidence="1">
    <location>
        <begin position="44"/>
        <end position="64"/>
    </location>
</feature>
<feature type="transmembrane region" description="Helical" evidence="1">
    <location>
        <begin position="71"/>
        <end position="91"/>
    </location>
</feature>
<feature type="transmembrane region" description="Helical" evidence="1">
    <location>
        <begin position="98"/>
        <end position="118"/>
    </location>
</feature>
<feature type="transmembrane region" description="Helical" evidence="1">
    <location>
        <begin position="143"/>
        <end position="163"/>
    </location>
</feature>
<feature type="transmembrane region" description="Helical" evidence="1">
    <location>
        <begin position="225"/>
        <end position="245"/>
    </location>
</feature>
<feature type="transmembrane region" description="Helical" evidence="1">
    <location>
        <begin position="258"/>
        <end position="275"/>
    </location>
</feature>
<feature type="transmembrane region" description="Helical" evidence="1">
    <location>
        <begin position="286"/>
        <end position="306"/>
    </location>
</feature>
<organism>
    <name type="scientific">Buxus microphylla</name>
    <name type="common">Littleleaf boxwood</name>
    <name type="synonym">Japanese boxwood</name>
    <dbReference type="NCBI Taxonomy" id="153571"/>
    <lineage>
        <taxon>Eukaryota</taxon>
        <taxon>Viridiplantae</taxon>
        <taxon>Streptophyta</taxon>
        <taxon>Embryophyta</taxon>
        <taxon>Tracheophyta</taxon>
        <taxon>Spermatophyta</taxon>
        <taxon>Magnoliopsida</taxon>
        <taxon>Buxales</taxon>
        <taxon>Buxaceae</taxon>
        <taxon>Buxus</taxon>
    </lineage>
</organism>
<proteinExistence type="inferred from homology"/>
<evidence type="ECO:0000255" key="1">
    <source>
        <dbReference type="HAMAP-Rule" id="MF_01391"/>
    </source>
</evidence>
<geneLocation type="chloroplast"/>